<proteinExistence type="inferred from homology"/>
<keyword id="KW-0648">Protein biosynthesis</keyword>
<keyword id="KW-0808">Transferase</keyword>
<reference key="1">
    <citation type="submission" date="1997-05" db="EMBL/GenBank/DDBJ databases">
        <title>Rearrangement of the rRNA genes in Rickettsia preceeded the divergence of the typhus and the spotted fever group Rickettsia.</title>
        <authorList>
            <person name="Andersson S.G.E."/>
            <person name="Stothard D.R."/>
            <person name="Romedenne M."/>
            <person name="Viseur N."/>
            <person name="Fuerst P."/>
            <person name="Kurland C.G."/>
        </authorList>
    </citation>
    <scope>NUCLEOTIDE SEQUENCE [GENOMIC DNA]</scope>
</reference>
<name>FMT_RICAU</name>
<gene>
    <name type="primary">fmt</name>
</gene>
<accession>O33510</accession>
<dbReference type="EC" id="2.1.2.9" evidence="1"/>
<dbReference type="EMBL" id="Y13130">
    <property type="protein sequence ID" value="CAA73597.1"/>
    <property type="molecule type" value="Genomic_DNA"/>
</dbReference>
<dbReference type="SMR" id="O33510"/>
<dbReference type="GO" id="GO:0004479">
    <property type="term" value="F:methionyl-tRNA formyltransferase activity"/>
    <property type="evidence" value="ECO:0007669"/>
    <property type="project" value="UniProtKB-EC"/>
</dbReference>
<dbReference type="CDD" id="cd08704">
    <property type="entry name" value="Met_tRNA_FMT_C"/>
    <property type="match status" value="1"/>
</dbReference>
<dbReference type="Gene3D" id="3.10.25.10">
    <property type="entry name" value="Formyl transferase, C-terminal domain"/>
    <property type="match status" value="1"/>
</dbReference>
<dbReference type="InterPro" id="IPR005793">
    <property type="entry name" value="Formyl_trans_C"/>
</dbReference>
<dbReference type="InterPro" id="IPR037022">
    <property type="entry name" value="Formyl_trans_C_sf"/>
</dbReference>
<dbReference type="InterPro" id="IPR011034">
    <property type="entry name" value="Formyl_transferase-like_C_sf"/>
</dbReference>
<dbReference type="InterPro" id="IPR044135">
    <property type="entry name" value="Met-tRNA-FMT_C"/>
</dbReference>
<dbReference type="Pfam" id="PF02911">
    <property type="entry name" value="Formyl_trans_C"/>
    <property type="match status" value="1"/>
</dbReference>
<dbReference type="SUPFAM" id="SSF50486">
    <property type="entry name" value="FMT C-terminal domain-like"/>
    <property type="match status" value="1"/>
</dbReference>
<protein>
    <recommendedName>
        <fullName evidence="1">Methionyl-tRNA formyltransferase</fullName>
        <ecNumber evidence="1">2.1.2.9</ecNumber>
    </recommendedName>
</protein>
<evidence type="ECO:0000250" key="1">
    <source>
        <dbReference type="UniProtKB" id="P23882"/>
    </source>
</evidence>
<evidence type="ECO:0000305" key="2"/>
<sequence>YFSYNDKVIKILEAEYLNTNHHFTAGTVISDKLEIACGSGILQVQKLQQESKKALNVEEFLRGTNILKATILK</sequence>
<organism>
    <name type="scientific">Rickettsia australis</name>
    <dbReference type="NCBI Taxonomy" id="787"/>
    <lineage>
        <taxon>Bacteria</taxon>
        <taxon>Pseudomonadati</taxon>
        <taxon>Pseudomonadota</taxon>
        <taxon>Alphaproteobacteria</taxon>
        <taxon>Rickettsiales</taxon>
        <taxon>Rickettsiaceae</taxon>
        <taxon>Rickettsieae</taxon>
        <taxon>Rickettsia</taxon>
        <taxon>spotted fever group</taxon>
    </lineage>
</organism>
<comment type="function">
    <text evidence="1">Attaches a formyl group to the free amino group of methionyl-tRNA(fMet). The formyl group appears to play a dual role in the initiator identity of N-formylmethionyl-tRNA by promoting its recognition by IF2 and preventing the misappropriation of this tRNA by the elongation apparatus.</text>
</comment>
<comment type="catalytic activity">
    <reaction evidence="1">
        <text>L-methionyl-tRNA(fMet) + (6R)-10-formyltetrahydrofolate = N-formyl-L-methionyl-tRNA(fMet) + (6S)-5,6,7,8-tetrahydrofolate + H(+)</text>
        <dbReference type="Rhea" id="RHEA:24380"/>
        <dbReference type="Rhea" id="RHEA-COMP:9952"/>
        <dbReference type="Rhea" id="RHEA-COMP:9953"/>
        <dbReference type="ChEBI" id="CHEBI:15378"/>
        <dbReference type="ChEBI" id="CHEBI:57453"/>
        <dbReference type="ChEBI" id="CHEBI:78530"/>
        <dbReference type="ChEBI" id="CHEBI:78844"/>
        <dbReference type="ChEBI" id="CHEBI:195366"/>
        <dbReference type="EC" id="2.1.2.9"/>
    </reaction>
</comment>
<comment type="similarity">
    <text evidence="2">Belongs to the Fmt family.</text>
</comment>
<feature type="chain" id="PRO_0000083027" description="Methionyl-tRNA formyltransferase">
    <location>
        <begin position="1" status="less than"/>
        <end position="73"/>
    </location>
</feature>
<feature type="non-terminal residue">
    <location>
        <position position="1"/>
    </location>
</feature>